<organism>
    <name type="scientific">Dictyostelium discoideum</name>
    <name type="common">Social amoeba</name>
    <dbReference type="NCBI Taxonomy" id="44689"/>
    <lineage>
        <taxon>Eukaryota</taxon>
        <taxon>Amoebozoa</taxon>
        <taxon>Evosea</taxon>
        <taxon>Eumycetozoa</taxon>
        <taxon>Dictyostelia</taxon>
        <taxon>Dictyosteliales</taxon>
        <taxon>Dictyosteliaceae</taxon>
        <taxon>Dictyostelium</taxon>
    </lineage>
</organism>
<keyword id="KW-0156">Chromatin regulator</keyword>
<keyword id="KW-0238">DNA-binding</keyword>
<keyword id="KW-0489">Methyltransferase</keyword>
<keyword id="KW-0539">Nucleus</keyword>
<keyword id="KW-1185">Reference proteome</keyword>
<keyword id="KW-0949">S-adenosyl-L-methionine</keyword>
<keyword id="KW-0804">Transcription</keyword>
<keyword id="KW-0805">Transcription regulation</keyword>
<keyword id="KW-0808">Transferase</keyword>
<dbReference type="EC" id="2.1.1.37"/>
<dbReference type="EMBL" id="AAFI02000107">
    <property type="protein sequence ID" value="EAL63449.1"/>
    <property type="molecule type" value="Genomic_DNA"/>
</dbReference>
<dbReference type="RefSeq" id="XP_636955.1">
    <property type="nucleotide sequence ID" value="XM_631863.1"/>
</dbReference>
<dbReference type="SMR" id="Q54JH6"/>
<dbReference type="FunCoup" id="Q54JH6">
    <property type="interactions" value="385"/>
</dbReference>
<dbReference type="STRING" id="44689.Q54JH6"/>
<dbReference type="PaxDb" id="44689-DDB0231095"/>
<dbReference type="EnsemblProtists" id="EAL63449">
    <property type="protein sequence ID" value="EAL63449"/>
    <property type="gene ID" value="DDB_G0288047"/>
</dbReference>
<dbReference type="GeneID" id="8626430"/>
<dbReference type="KEGG" id="ddi:DDB_G0288047"/>
<dbReference type="dictyBase" id="DDB_G0288047">
    <property type="gene designation" value="dnmA"/>
</dbReference>
<dbReference type="VEuPathDB" id="AmoebaDB:DDB_G0288047"/>
<dbReference type="eggNOG" id="KOG0919">
    <property type="taxonomic scope" value="Eukaryota"/>
</dbReference>
<dbReference type="HOGENOM" id="CLU_049101_0_0_1"/>
<dbReference type="InParanoid" id="Q54JH6"/>
<dbReference type="OMA" id="HYAFKYA"/>
<dbReference type="PhylomeDB" id="Q54JH6"/>
<dbReference type="BRENDA" id="2.1.1.203">
    <property type="organism ID" value="1939"/>
</dbReference>
<dbReference type="PRO" id="PR:Q54JH6"/>
<dbReference type="Proteomes" id="UP000002195">
    <property type="component" value="Chromosome 5"/>
</dbReference>
<dbReference type="GO" id="GO:0005634">
    <property type="term" value="C:nucleus"/>
    <property type="evidence" value="ECO:0000314"/>
    <property type="project" value="dictyBase"/>
</dbReference>
<dbReference type="GO" id="GO:0003886">
    <property type="term" value="F:DNA (cytosine-5-)-methyltransferase activity"/>
    <property type="evidence" value="ECO:0000315"/>
    <property type="project" value="dictyBase"/>
</dbReference>
<dbReference type="GO" id="GO:0003677">
    <property type="term" value="F:DNA binding"/>
    <property type="evidence" value="ECO:0007669"/>
    <property type="project" value="UniProtKB-KW"/>
</dbReference>
<dbReference type="GO" id="GO:0016427">
    <property type="term" value="F:tRNA (cytidine) methyltransferase activity"/>
    <property type="evidence" value="ECO:0000314"/>
    <property type="project" value="dictyBase"/>
</dbReference>
<dbReference type="GO" id="GO:0016428">
    <property type="term" value="F:tRNA (cytidine-5-)-methyltransferase activity"/>
    <property type="evidence" value="ECO:0000314"/>
    <property type="project" value="dictyBase"/>
</dbReference>
<dbReference type="GO" id="GO:0031154">
    <property type="term" value="P:culmination involved in sorocarp development"/>
    <property type="evidence" value="ECO:0000315"/>
    <property type="project" value="dictyBase"/>
</dbReference>
<dbReference type="GO" id="GO:0040029">
    <property type="term" value="P:epigenetic regulation of gene expression"/>
    <property type="evidence" value="ECO:0000315"/>
    <property type="project" value="dictyBase"/>
</dbReference>
<dbReference type="GO" id="GO:0030435">
    <property type="term" value="P:sporulation resulting in formation of a cellular spore"/>
    <property type="evidence" value="ECO:0000315"/>
    <property type="project" value="dictyBase"/>
</dbReference>
<dbReference type="GO" id="GO:0010526">
    <property type="term" value="P:transposable element silencing"/>
    <property type="evidence" value="ECO:0000314"/>
    <property type="project" value="GO_Central"/>
</dbReference>
<dbReference type="GO" id="GO:0030488">
    <property type="term" value="P:tRNA methylation"/>
    <property type="evidence" value="ECO:0000314"/>
    <property type="project" value="dictyBase"/>
</dbReference>
<dbReference type="GO" id="GO:0008033">
    <property type="term" value="P:tRNA processing"/>
    <property type="evidence" value="ECO:0000314"/>
    <property type="project" value="dictyBase"/>
</dbReference>
<dbReference type="Gene3D" id="3.90.120.10">
    <property type="entry name" value="DNA Methylase, subunit A, domain 2"/>
    <property type="match status" value="1"/>
</dbReference>
<dbReference type="Gene3D" id="3.40.50.150">
    <property type="entry name" value="Vaccinia Virus protein VP39"/>
    <property type="match status" value="1"/>
</dbReference>
<dbReference type="InterPro" id="IPR050750">
    <property type="entry name" value="C5-MTase"/>
</dbReference>
<dbReference type="InterPro" id="IPR001525">
    <property type="entry name" value="C5_MeTfrase"/>
</dbReference>
<dbReference type="InterPro" id="IPR029063">
    <property type="entry name" value="SAM-dependent_MTases_sf"/>
</dbReference>
<dbReference type="NCBIfam" id="TIGR00675">
    <property type="entry name" value="dcm"/>
    <property type="match status" value="1"/>
</dbReference>
<dbReference type="PANTHER" id="PTHR46098">
    <property type="entry name" value="TRNA (CYTOSINE(38)-C(5))-METHYLTRANSFERASE"/>
    <property type="match status" value="1"/>
</dbReference>
<dbReference type="PANTHER" id="PTHR46098:SF1">
    <property type="entry name" value="TRNA (CYTOSINE(38)-C(5))-METHYLTRANSFERASE"/>
    <property type="match status" value="1"/>
</dbReference>
<dbReference type="Pfam" id="PF00145">
    <property type="entry name" value="DNA_methylase"/>
    <property type="match status" value="1"/>
</dbReference>
<dbReference type="PRINTS" id="PR00105">
    <property type="entry name" value="C5METTRFRASE"/>
</dbReference>
<dbReference type="SUPFAM" id="SSF53335">
    <property type="entry name" value="S-adenosyl-L-methionine-dependent methyltransferases"/>
    <property type="match status" value="1"/>
</dbReference>
<dbReference type="PROSITE" id="PS51679">
    <property type="entry name" value="SAM_MT_C5"/>
    <property type="match status" value="1"/>
</dbReference>
<comment type="function">
    <text evidence="4 5">Involved in epigenetic gene silencing. Methylates specific cytosine residues in the retrotransposons DIRS-1 and Skipper.</text>
</comment>
<comment type="catalytic activity">
    <reaction evidence="4 5">
        <text>a 2'-deoxycytidine in DNA + S-adenosyl-L-methionine = a 5-methyl-2'-deoxycytidine in DNA + S-adenosyl-L-homocysteine + H(+)</text>
        <dbReference type="Rhea" id="RHEA:13681"/>
        <dbReference type="Rhea" id="RHEA-COMP:11369"/>
        <dbReference type="Rhea" id="RHEA-COMP:11370"/>
        <dbReference type="ChEBI" id="CHEBI:15378"/>
        <dbReference type="ChEBI" id="CHEBI:57856"/>
        <dbReference type="ChEBI" id="CHEBI:59789"/>
        <dbReference type="ChEBI" id="CHEBI:85452"/>
        <dbReference type="ChEBI" id="CHEBI:85454"/>
        <dbReference type="EC" id="2.1.1.37"/>
    </reaction>
</comment>
<comment type="subcellular location">
    <subcellularLocation>
        <location evidence="1">Nucleus</location>
    </subcellularLocation>
</comment>
<comment type="developmental stage">
    <text evidence="4">Expressed during vegetative growth and throughout development. Levels decrease after aggregation and are lowest during culmination.</text>
</comment>
<comment type="disruption phenotype">
    <text evidence="4 5">Mutants exhibit altered gene expression, and after undergoing 16 development cycles some mutant cells displayed reduced growth on axenic medium. DIRS-1 expression was unaffected but Skipper expression was increased in mutant cells after 16 cycles of development. Mutants lacking dmaA exhibit culmination defects including fragmented, transluscent sori, and fewer spores than wild type.</text>
</comment>
<comment type="similarity">
    <text evidence="2">Belongs to the class I-like SAM-binding methyltransferase superfamily. C5-methyltransferase family.</text>
</comment>
<reference key="1">
    <citation type="journal article" date="2005" name="Nature">
        <title>The genome of the social amoeba Dictyostelium discoideum.</title>
        <authorList>
            <person name="Eichinger L."/>
            <person name="Pachebat J.A."/>
            <person name="Gloeckner G."/>
            <person name="Rajandream M.A."/>
            <person name="Sucgang R."/>
            <person name="Berriman M."/>
            <person name="Song J."/>
            <person name="Olsen R."/>
            <person name="Szafranski K."/>
            <person name="Xu Q."/>
            <person name="Tunggal B."/>
            <person name="Kummerfeld S."/>
            <person name="Madera M."/>
            <person name="Konfortov B.A."/>
            <person name="Rivero F."/>
            <person name="Bankier A.T."/>
            <person name="Lehmann R."/>
            <person name="Hamlin N."/>
            <person name="Davies R."/>
            <person name="Gaudet P."/>
            <person name="Fey P."/>
            <person name="Pilcher K."/>
            <person name="Chen G."/>
            <person name="Saunders D."/>
            <person name="Sodergren E.J."/>
            <person name="Davis P."/>
            <person name="Kerhornou A."/>
            <person name="Nie X."/>
            <person name="Hall N."/>
            <person name="Anjard C."/>
            <person name="Hemphill L."/>
            <person name="Bason N."/>
            <person name="Farbrother P."/>
            <person name="Desany B."/>
            <person name="Just E."/>
            <person name="Morio T."/>
            <person name="Rost R."/>
            <person name="Churcher C.M."/>
            <person name="Cooper J."/>
            <person name="Haydock S."/>
            <person name="van Driessche N."/>
            <person name="Cronin A."/>
            <person name="Goodhead I."/>
            <person name="Muzny D.M."/>
            <person name="Mourier T."/>
            <person name="Pain A."/>
            <person name="Lu M."/>
            <person name="Harper D."/>
            <person name="Lindsay R."/>
            <person name="Hauser H."/>
            <person name="James K.D."/>
            <person name="Quiles M."/>
            <person name="Madan Babu M."/>
            <person name="Saito T."/>
            <person name="Buchrieser C."/>
            <person name="Wardroper A."/>
            <person name="Felder M."/>
            <person name="Thangavelu M."/>
            <person name="Johnson D."/>
            <person name="Knights A."/>
            <person name="Loulseged H."/>
            <person name="Mungall K.L."/>
            <person name="Oliver K."/>
            <person name="Price C."/>
            <person name="Quail M.A."/>
            <person name="Urushihara H."/>
            <person name="Hernandez J."/>
            <person name="Rabbinowitsch E."/>
            <person name="Steffen D."/>
            <person name="Sanders M."/>
            <person name="Ma J."/>
            <person name="Kohara Y."/>
            <person name="Sharp S."/>
            <person name="Simmonds M.N."/>
            <person name="Spiegler S."/>
            <person name="Tivey A."/>
            <person name="Sugano S."/>
            <person name="White B."/>
            <person name="Walker D."/>
            <person name="Woodward J.R."/>
            <person name="Winckler T."/>
            <person name="Tanaka Y."/>
            <person name="Shaulsky G."/>
            <person name="Schleicher M."/>
            <person name="Weinstock G.M."/>
            <person name="Rosenthal A."/>
            <person name="Cox E.C."/>
            <person name="Chisholm R.L."/>
            <person name="Gibbs R.A."/>
            <person name="Loomis W.F."/>
            <person name="Platzer M."/>
            <person name="Kay R.R."/>
            <person name="Williams J.G."/>
            <person name="Dear P.H."/>
            <person name="Noegel A.A."/>
            <person name="Barrell B.G."/>
            <person name="Kuspa A."/>
        </authorList>
    </citation>
    <scope>NUCLEOTIDE SEQUENCE [LARGE SCALE GENOMIC DNA]</scope>
    <source>
        <strain>AX4</strain>
    </source>
</reference>
<reference key="2">
    <citation type="journal article" date="2005" name="Mol. Biol. Evol.">
        <title>Evolutionary diversification of DNA methyltransferases in eukaryotic genomes.</title>
        <authorList>
            <person name="Ponger L."/>
            <person name="Li W.H."/>
        </authorList>
    </citation>
    <scope>IDENTIFICATION</scope>
</reference>
<reference key="3">
    <citation type="journal article" date="2005" name="Nucleic Acids Res.">
        <title>Silencing of retrotransposons in Dictyostelium by DNA methylation and RNAi.</title>
        <authorList>
            <person name="Kuhlmann M."/>
            <person name="Borisova B.E."/>
            <person name="Kaller M."/>
            <person name="Larsson P."/>
            <person name="Stach D."/>
            <person name="Na J."/>
            <person name="Eichinger L."/>
            <person name="Lyko F."/>
            <person name="Ambros V."/>
            <person name="Soderbom F."/>
            <person name="Hammann C."/>
            <person name="Nellen W."/>
        </authorList>
    </citation>
    <scope>FUNCTION</scope>
    <scope>CATALYTIC ACTIVITY</scope>
    <scope>DEVELOPMENTAL STAGE</scope>
    <scope>DISRUPTION PHENOTYPE</scope>
</reference>
<reference key="4">
    <citation type="journal article" date="2006" name="Eukaryot. Cell">
        <title>Developmentally regulated DNA methylation in Dictyostelium discoideum.</title>
        <authorList>
            <person name="Katoh M."/>
            <person name="Curk T."/>
            <person name="Xu Q."/>
            <person name="Zupan B."/>
            <person name="Kuspa A."/>
            <person name="Shaulsky G."/>
        </authorList>
    </citation>
    <scope>FUNCTION</scope>
    <scope>CATALYTIC ACTIVITY</scope>
    <scope>DISRUPTION PHENOTYPE</scope>
</reference>
<name>CMT1_DICDI</name>
<proteinExistence type="evidence at protein level"/>
<evidence type="ECO:0000250" key="1"/>
<evidence type="ECO:0000255" key="2">
    <source>
        <dbReference type="PROSITE-ProRule" id="PRU01016"/>
    </source>
</evidence>
<evidence type="ECO:0000256" key="3">
    <source>
        <dbReference type="SAM" id="MobiDB-lite"/>
    </source>
</evidence>
<evidence type="ECO:0000269" key="4">
    <source>
    </source>
</evidence>
<evidence type="ECO:0000269" key="5">
    <source>
    </source>
</evidence>
<protein>
    <recommendedName>
        <fullName>DNA (cytosine-5)-methyltransferase</fullName>
        <ecNumber>2.1.1.37</ecNumber>
    </recommendedName>
</protein>
<sequence length="379" mass="44115">MEQLRVLEFYSGIGGMHYGLQESGVDFQVIQSFDINTNANLNYKYTFNEDSSQKSIESYSVEELEGFKANAWLMSPPCQPFTRLGLQKDDQDNRTNSFFHLLDVLTKIKDPPTYILIENVFGFAKKGSSNTRDHLLDTLIKMNYSFQEFHLSPQQFGLANQRLRYFCIAKRNGKLNFKKEQDKHNEKVDENKLNNNSNNNNEQNKYDNLKILDHIPGYDFHTTLEECDEISNYFDKDLTDDELYEKYKVPHNLLLSKGMLFDIKQKDSKTSNCVTKSYGKFIEGTGSIIQMDNNFKADINDNKSLIPLKLRYFSPKEITRLHGFPEEFKFSPKLTTIQCYRLIGNSLNVKIVSELLKVLVSPNEEEEQQEQQKEKEGKK</sequence>
<feature type="chain" id="PRO_0000328901" description="DNA (cytosine-5)-methyltransferase">
    <location>
        <begin position="1"/>
        <end position="379"/>
    </location>
</feature>
<feature type="domain" description="SAM-dependent MTase C5-type" evidence="2">
    <location>
        <begin position="4"/>
        <end position="366"/>
    </location>
</feature>
<feature type="region of interest" description="Disordered" evidence="3">
    <location>
        <begin position="178"/>
        <end position="205"/>
    </location>
</feature>
<feature type="compositionally biased region" description="Basic and acidic residues" evidence="3">
    <location>
        <begin position="178"/>
        <end position="192"/>
    </location>
</feature>
<feature type="compositionally biased region" description="Low complexity" evidence="3">
    <location>
        <begin position="193"/>
        <end position="203"/>
    </location>
</feature>
<feature type="active site" evidence="2">
    <location>
        <position position="78"/>
    </location>
</feature>
<gene>
    <name type="primary">dnmA</name>
    <name type="ORF">DDB_G0288047</name>
</gene>
<accession>Q54JH6</accession>